<protein>
    <recommendedName>
        <fullName>Centrosomal protein of 44 kDa</fullName>
        <shortName>Cep44</shortName>
    </recommendedName>
</protein>
<evidence type="ECO:0000250" key="1">
    <source>
        <dbReference type="UniProtKB" id="Q9C0F1"/>
    </source>
</evidence>
<evidence type="ECO:0000255" key="2"/>
<feature type="chain" id="PRO_0000293725" description="Centrosomal protein of 44 kDa">
    <location>
        <begin position="1"/>
        <end position="386"/>
    </location>
</feature>
<feature type="region of interest" description="Binds with microtubules and centrioles" evidence="1">
    <location>
        <begin position="11"/>
        <end position="194"/>
    </location>
</feature>
<feature type="coiled-coil region" evidence="2">
    <location>
        <begin position="232"/>
        <end position="262"/>
    </location>
</feature>
<feature type="coiled-coil region" evidence="2">
    <location>
        <begin position="359"/>
        <end position="382"/>
    </location>
</feature>
<feature type="modified residue" description="Phosphoserine" evidence="1">
    <location>
        <position position="329"/>
    </location>
</feature>
<comment type="function">
    <text evidence="1">Centriole-enriched microtubule-binding protein involved in centriole biogenesis. In collaboration with CEP295 and POC1B, is required for the centriole-to-centrosome conversion by ensuring the formation of bona fide centriole wall. Functions as a linker component that maintains centrosome cohesion. Associates with CROCC and regulates its stability and localization to the centrosome.</text>
</comment>
<comment type="subunit">
    <text evidence="1">Interacts with CROCC. Interacts with POC1B; the interaction is direct and recruits POC1B to centriolar microtubules. Binds to centriolar microtubules.</text>
</comment>
<comment type="subcellular location">
    <subcellularLocation>
        <location evidence="1">Cytoplasm</location>
        <location evidence="1">Cytoskeleton</location>
        <location evidence="1">Microtubule organizing center</location>
        <location evidence="1">Centrosome</location>
    </subcellularLocation>
    <subcellularLocation>
        <location evidence="1">Cytoplasm</location>
        <location evidence="1">Cytoskeleton</location>
        <location evidence="1">Microtubule organizing center</location>
        <location evidence="1">Centrosome</location>
        <location evidence="1">Centriole</location>
    </subcellularLocation>
    <subcellularLocation>
        <location evidence="1">Cytoplasm</location>
        <location evidence="1">Cytoskeleton</location>
        <location evidence="1">Spindle pole</location>
    </subcellularLocation>
    <subcellularLocation>
        <location evidence="1">Midbody</location>
    </subcellularLocation>
    <text evidence="1">Localizes to the proximal end of mother and daughter centrioles.</text>
</comment>
<name>CEP44_RAT</name>
<accession>Q3B7T8</accession>
<reference key="1">
    <citation type="journal article" date="2004" name="Genome Res.">
        <title>The status, quality, and expansion of the NIH full-length cDNA project: the Mammalian Gene Collection (MGC).</title>
        <authorList>
            <consortium name="The MGC Project Team"/>
        </authorList>
    </citation>
    <scope>NUCLEOTIDE SEQUENCE [LARGE SCALE MRNA]</scope>
    <source>
        <tissue>Testis</tissue>
    </source>
</reference>
<keyword id="KW-0175">Coiled coil</keyword>
<keyword id="KW-0963">Cytoplasm</keyword>
<keyword id="KW-0206">Cytoskeleton</keyword>
<keyword id="KW-0597">Phosphoprotein</keyword>
<keyword id="KW-1185">Reference proteome</keyword>
<dbReference type="EMBL" id="BC107470">
    <property type="protein sequence ID" value="AAI07471.1"/>
    <property type="molecule type" value="mRNA"/>
</dbReference>
<dbReference type="RefSeq" id="NP_001032258.1">
    <property type="nucleotide sequence ID" value="NM_001037181.1"/>
</dbReference>
<dbReference type="RefSeq" id="XP_006253149.1">
    <property type="nucleotide sequence ID" value="XM_006253087.5"/>
</dbReference>
<dbReference type="SMR" id="Q3B7T8"/>
<dbReference type="BioGRID" id="253300">
    <property type="interactions" value="1"/>
</dbReference>
<dbReference type="FunCoup" id="Q3B7T8">
    <property type="interactions" value="1786"/>
</dbReference>
<dbReference type="STRING" id="10116.ENSRNOP00000014083"/>
<dbReference type="PhosphoSitePlus" id="Q3B7T8"/>
<dbReference type="PaxDb" id="10116-ENSRNOP00000014083"/>
<dbReference type="Ensembl" id="ENSRNOT00000014083.6">
    <property type="protein sequence ID" value="ENSRNOP00000014083.5"/>
    <property type="gene ID" value="ENSRNOG00000010566.6"/>
</dbReference>
<dbReference type="GeneID" id="290722"/>
<dbReference type="KEGG" id="rno:290722"/>
<dbReference type="UCSC" id="RGD:1308517">
    <property type="organism name" value="rat"/>
</dbReference>
<dbReference type="AGR" id="RGD:1308517"/>
<dbReference type="CTD" id="80817"/>
<dbReference type="RGD" id="1308517">
    <property type="gene designation" value="Cep44"/>
</dbReference>
<dbReference type="eggNOG" id="ENOG502R3RQ">
    <property type="taxonomic scope" value="Eukaryota"/>
</dbReference>
<dbReference type="GeneTree" id="ENSGT00390000009873"/>
<dbReference type="HOGENOM" id="CLU_060541_0_0_1"/>
<dbReference type="InParanoid" id="Q3B7T8"/>
<dbReference type="OMA" id="NWMEDKL"/>
<dbReference type="OrthoDB" id="259598at2759"/>
<dbReference type="PhylomeDB" id="Q3B7T8"/>
<dbReference type="TreeFam" id="TF332994"/>
<dbReference type="PRO" id="PR:Q3B7T8"/>
<dbReference type="Proteomes" id="UP000002494">
    <property type="component" value="Chromosome 16"/>
</dbReference>
<dbReference type="Bgee" id="ENSRNOG00000010566">
    <property type="expression patterns" value="Expressed in ovary and 19 other cell types or tissues"/>
</dbReference>
<dbReference type="GO" id="GO:0005814">
    <property type="term" value="C:centriole"/>
    <property type="evidence" value="ECO:0000250"/>
    <property type="project" value="UniProtKB"/>
</dbReference>
<dbReference type="GO" id="GO:0005813">
    <property type="term" value="C:centrosome"/>
    <property type="evidence" value="ECO:0000250"/>
    <property type="project" value="UniProtKB"/>
</dbReference>
<dbReference type="GO" id="GO:0005737">
    <property type="term" value="C:cytoplasm"/>
    <property type="evidence" value="ECO:0007669"/>
    <property type="project" value="UniProtKB-KW"/>
</dbReference>
<dbReference type="GO" id="GO:0030496">
    <property type="term" value="C:midbody"/>
    <property type="evidence" value="ECO:0007669"/>
    <property type="project" value="UniProtKB-SubCell"/>
</dbReference>
<dbReference type="GO" id="GO:0000922">
    <property type="term" value="C:spindle pole"/>
    <property type="evidence" value="ECO:0000250"/>
    <property type="project" value="UniProtKB"/>
</dbReference>
<dbReference type="GO" id="GO:0008017">
    <property type="term" value="F:microtubule binding"/>
    <property type="evidence" value="ECO:0000250"/>
    <property type="project" value="UniProtKB"/>
</dbReference>
<dbReference type="GO" id="GO:0007099">
    <property type="term" value="P:centriole replication"/>
    <property type="evidence" value="ECO:0000250"/>
    <property type="project" value="UniProtKB"/>
</dbReference>
<dbReference type="GO" id="GO:0010457">
    <property type="term" value="P:centriole-centriole cohesion"/>
    <property type="evidence" value="ECO:0000250"/>
    <property type="project" value="UniProtKB"/>
</dbReference>
<dbReference type="GO" id="GO:0007098">
    <property type="term" value="P:centrosome cycle"/>
    <property type="evidence" value="ECO:0000250"/>
    <property type="project" value="UniProtKB"/>
</dbReference>
<dbReference type="InterPro" id="IPR033603">
    <property type="entry name" value="CEP44"/>
</dbReference>
<dbReference type="InterPro" id="IPR029157">
    <property type="entry name" value="CEP44_CC"/>
</dbReference>
<dbReference type="PANTHER" id="PTHR31477">
    <property type="entry name" value="CENTROSOMAL PROTEIN OF 44 KDA"/>
    <property type="match status" value="1"/>
</dbReference>
<dbReference type="PANTHER" id="PTHR31477:SF1">
    <property type="entry name" value="CENTROSOMAL PROTEIN OF 44 KDA"/>
    <property type="match status" value="1"/>
</dbReference>
<dbReference type="Pfam" id="PF15007">
    <property type="entry name" value="CEP44"/>
    <property type="match status" value="1"/>
</dbReference>
<gene>
    <name type="primary">Cep44</name>
</gene>
<organism>
    <name type="scientific">Rattus norvegicus</name>
    <name type="common">Rat</name>
    <dbReference type="NCBI Taxonomy" id="10116"/>
    <lineage>
        <taxon>Eukaryota</taxon>
        <taxon>Metazoa</taxon>
        <taxon>Chordata</taxon>
        <taxon>Craniata</taxon>
        <taxon>Vertebrata</taxon>
        <taxon>Euteleostomi</taxon>
        <taxon>Mammalia</taxon>
        <taxon>Eutheria</taxon>
        <taxon>Euarchontoglires</taxon>
        <taxon>Glires</taxon>
        <taxon>Rodentia</taxon>
        <taxon>Myomorpha</taxon>
        <taxon>Muroidea</taxon>
        <taxon>Muridae</taxon>
        <taxon>Murinae</taxon>
        <taxon>Rattus</taxon>
    </lineage>
</organism>
<proteinExistence type="evidence at transcript level"/>
<sequence length="386" mass="43266">MATGDLKRSLRKLEQVLRSLNYPNEVDYVGLMKGDTAASLPIISYSLTSYSPHVAELLMESNIELIAKNDVRFTDTVYKLLRDQFDYKPILTKKQFIQSGFAEWKIEIVCDILNCVMKKHKKLIGLDKNSSCQRKKSISEKPEPCSSREKCPAEAVGIDVTGRFMTSGKKKAVVIRHLYTEENVGVPEGTVTSTEVSEGCDELEEQSSDIRIPEAQAPEVKAELQDMCDNPELTALQIALAECQEKLKKLTWIEKRLECLEATTKGKVMVDEKAWNNILSRVTLLETEMLLSKKNESVEPNTTSEDSESVSGVDVVPYDKKYSVEGPASTCHSSGYSTVSSATVPRSSTINYCGLNNFSEETTMQKMERMKKMFEETAELLKCSSR</sequence>